<name>TRPB_RHIR8</name>
<keyword id="KW-0028">Amino-acid biosynthesis</keyword>
<keyword id="KW-0057">Aromatic amino acid biosynthesis</keyword>
<keyword id="KW-0456">Lyase</keyword>
<keyword id="KW-0663">Pyridoxal phosphate</keyword>
<keyword id="KW-0822">Tryptophan biosynthesis</keyword>
<sequence>MNQTPKLNSFRAGPDEDGRFGIYGGRFVAETLMPLILDLQEEWEKAKNDPAFQAELKSLGTHYIGRPSPLYFAERLTAELGGAKIYFKREELNHTGSHKINNCIGQILLAKRMGKTRIIAETGAGQHGVASATVAARFGLPCVVYMGATDVERQAPNVFRMKLLGAEVIPVTAGSGTLKDAMNEALRDWVTNVDDTYYLIGTAAGPHPYPEMVRDFQAVIGTEAKQQMLEAEGRLPDLVIAAVGGGSNAIGIFHPFLDDESVKIVGVEAGGKGLQGDEHCASITAGSPGVLHGNRTYLLQDGDGQIKEGHSISAGLDYPGIGPEHSWLNDIGRAEYVPIMDHEALEAFQTLTRLEGIIPALEPSHALAEVIKRAPKMGKDEIILMNLSGRGDKDIFTVAKILGM</sequence>
<organism>
    <name type="scientific">Rhizobium rhizogenes (strain K84 / ATCC BAA-868)</name>
    <name type="common">Agrobacterium radiobacter</name>
    <dbReference type="NCBI Taxonomy" id="311403"/>
    <lineage>
        <taxon>Bacteria</taxon>
        <taxon>Pseudomonadati</taxon>
        <taxon>Pseudomonadota</taxon>
        <taxon>Alphaproteobacteria</taxon>
        <taxon>Hyphomicrobiales</taxon>
        <taxon>Rhizobiaceae</taxon>
        <taxon>Rhizobium/Agrobacterium group</taxon>
        <taxon>Rhizobium</taxon>
    </lineage>
</organism>
<feature type="chain" id="PRO_1000198735" description="Tryptophan synthase beta chain">
    <location>
        <begin position="1"/>
        <end position="404"/>
    </location>
</feature>
<feature type="modified residue" description="N6-(pyridoxal phosphate)lysine" evidence="1">
    <location>
        <position position="99"/>
    </location>
</feature>
<dbReference type="EC" id="4.2.1.20" evidence="1"/>
<dbReference type="EMBL" id="CP000628">
    <property type="protein sequence ID" value="ACM24826.1"/>
    <property type="molecule type" value="Genomic_DNA"/>
</dbReference>
<dbReference type="RefSeq" id="WP_007698616.1">
    <property type="nucleotide sequence ID" value="NC_011985.1"/>
</dbReference>
<dbReference type="SMR" id="B9JG43"/>
<dbReference type="STRING" id="311403.Arad_0026"/>
<dbReference type="GeneID" id="86850429"/>
<dbReference type="KEGG" id="ara:Arad_0026"/>
<dbReference type="eggNOG" id="COG0133">
    <property type="taxonomic scope" value="Bacteria"/>
</dbReference>
<dbReference type="HOGENOM" id="CLU_016734_3_1_5"/>
<dbReference type="UniPathway" id="UPA00035">
    <property type="reaction ID" value="UER00044"/>
</dbReference>
<dbReference type="Proteomes" id="UP000001600">
    <property type="component" value="Chromosome 1"/>
</dbReference>
<dbReference type="GO" id="GO:0005737">
    <property type="term" value="C:cytoplasm"/>
    <property type="evidence" value="ECO:0007669"/>
    <property type="project" value="TreeGrafter"/>
</dbReference>
<dbReference type="GO" id="GO:0004834">
    <property type="term" value="F:tryptophan synthase activity"/>
    <property type="evidence" value="ECO:0007669"/>
    <property type="project" value="UniProtKB-UniRule"/>
</dbReference>
<dbReference type="CDD" id="cd06446">
    <property type="entry name" value="Trp-synth_B"/>
    <property type="match status" value="1"/>
</dbReference>
<dbReference type="FunFam" id="3.40.50.1100:FF:000001">
    <property type="entry name" value="Tryptophan synthase beta chain"/>
    <property type="match status" value="1"/>
</dbReference>
<dbReference type="FunFam" id="3.40.50.1100:FF:000004">
    <property type="entry name" value="Tryptophan synthase beta chain"/>
    <property type="match status" value="1"/>
</dbReference>
<dbReference type="Gene3D" id="3.40.50.1100">
    <property type="match status" value="2"/>
</dbReference>
<dbReference type="HAMAP" id="MF_00133">
    <property type="entry name" value="Trp_synth_beta"/>
    <property type="match status" value="1"/>
</dbReference>
<dbReference type="InterPro" id="IPR006653">
    <property type="entry name" value="Trp_synth_b_CS"/>
</dbReference>
<dbReference type="InterPro" id="IPR006654">
    <property type="entry name" value="Trp_synth_beta"/>
</dbReference>
<dbReference type="InterPro" id="IPR023026">
    <property type="entry name" value="Trp_synth_beta/beta-like"/>
</dbReference>
<dbReference type="InterPro" id="IPR001926">
    <property type="entry name" value="TrpB-like_PALP"/>
</dbReference>
<dbReference type="InterPro" id="IPR036052">
    <property type="entry name" value="TrpB-like_PALP_sf"/>
</dbReference>
<dbReference type="NCBIfam" id="TIGR00263">
    <property type="entry name" value="trpB"/>
    <property type="match status" value="1"/>
</dbReference>
<dbReference type="PANTHER" id="PTHR48077:SF3">
    <property type="entry name" value="TRYPTOPHAN SYNTHASE"/>
    <property type="match status" value="1"/>
</dbReference>
<dbReference type="PANTHER" id="PTHR48077">
    <property type="entry name" value="TRYPTOPHAN SYNTHASE-RELATED"/>
    <property type="match status" value="1"/>
</dbReference>
<dbReference type="Pfam" id="PF00291">
    <property type="entry name" value="PALP"/>
    <property type="match status" value="1"/>
</dbReference>
<dbReference type="PIRSF" id="PIRSF001413">
    <property type="entry name" value="Trp_syn_beta"/>
    <property type="match status" value="1"/>
</dbReference>
<dbReference type="SUPFAM" id="SSF53686">
    <property type="entry name" value="Tryptophan synthase beta subunit-like PLP-dependent enzymes"/>
    <property type="match status" value="1"/>
</dbReference>
<dbReference type="PROSITE" id="PS00168">
    <property type="entry name" value="TRP_SYNTHASE_BETA"/>
    <property type="match status" value="1"/>
</dbReference>
<accession>B9JG43</accession>
<protein>
    <recommendedName>
        <fullName evidence="1">Tryptophan synthase beta chain</fullName>
        <ecNumber evidence="1">4.2.1.20</ecNumber>
    </recommendedName>
</protein>
<gene>
    <name evidence="1" type="primary">trpB</name>
    <name type="ordered locus">Arad_0026</name>
</gene>
<reference key="1">
    <citation type="journal article" date="2009" name="J. Bacteriol.">
        <title>Genome sequences of three Agrobacterium biovars help elucidate the evolution of multichromosome genomes in bacteria.</title>
        <authorList>
            <person name="Slater S.C."/>
            <person name="Goldman B.S."/>
            <person name="Goodner B."/>
            <person name="Setubal J.C."/>
            <person name="Farrand S.K."/>
            <person name="Nester E.W."/>
            <person name="Burr T.J."/>
            <person name="Banta L."/>
            <person name="Dickerman A.W."/>
            <person name="Paulsen I."/>
            <person name="Otten L."/>
            <person name="Suen G."/>
            <person name="Welch R."/>
            <person name="Almeida N.F."/>
            <person name="Arnold F."/>
            <person name="Burton O.T."/>
            <person name="Du Z."/>
            <person name="Ewing A."/>
            <person name="Godsy E."/>
            <person name="Heisel S."/>
            <person name="Houmiel K.L."/>
            <person name="Jhaveri J."/>
            <person name="Lu J."/>
            <person name="Miller N.M."/>
            <person name="Norton S."/>
            <person name="Chen Q."/>
            <person name="Phoolcharoen W."/>
            <person name="Ohlin V."/>
            <person name="Ondrusek D."/>
            <person name="Pride N."/>
            <person name="Stricklin S.L."/>
            <person name="Sun J."/>
            <person name="Wheeler C."/>
            <person name="Wilson L."/>
            <person name="Zhu H."/>
            <person name="Wood D.W."/>
        </authorList>
    </citation>
    <scope>NUCLEOTIDE SEQUENCE [LARGE SCALE GENOMIC DNA]</scope>
    <source>
        <strain>K84 / ATCC BAA-868</strain>
    </source>
</reference>
<comment type="function">
    <text evidence="1">The beta subunit is responsible for the synthesis of L-tryptophan from indole and L-serine.</text>
</comment>
<comment type="catalytic activity">
    <reaction evidence="1">
        <text>(1S,2R)-1-C-(indol-3-yl)glycerol 3-phosphate + L-serine = D-glyceraldehyde 3-phosphate + L-tryptophan + H2O</text>
        <dbReference type="Rhea" id="RHEA:10532"/>
        <dbReference type="ChEBI" id="CHEBI:15377"/>
        <dbReference type="ChEBI" id="CHEBI:33384"/>
        <dbReference type="ChEBI" id="CHEBI:57912"/>
        <dbReference type="ChEBI" id="CHEBI:58866"/>
        <dbReference type="ChEBI" id="CHEBI:59776"/>
        <dbReference type="EC" id="4.2.1.20"/>
    </reaction>
</comment>
<comment type="cofactor">
    <cofactor evidence="1">
        <name>pyridoxal 5'-phosphate</name>
        <dbReference type="ChEBI" id="CHEBI:597326"/>
    </cofactor>
</comment>
<comment type="pathway">
    <text evidence="1">Amino-acid biosynthesis; L-tryptophan biosynthesis; L-tryptophan from chorismate: step 5/5.</text>
</comment>
<comment type="subunit">
    <text evidence="1">Tetramer of two alpha and two beta chains.</text>
</comment>
<comment type="similarity">
    <text evidence="1">Belongs to the TrpB family.</text>
</comment>
<evidence type="ECO:0000255" key="1">
    <source>
        <dbReference type="HAMAP-Rule" id="MF_00133"/>
    </source>
</evidence>
<proteinExistence type="inferred from homology"/>